<protein>
    <recommendedName>
        <fullName>Mediator of RNA polymerase II transcription subunit 18</fullName>
    </recommendedName>
    <alternativeName>
        <fullName>Cell separation protein sep11</fullName>
    </alternativeName>
    <alternativeName>
        <fullName>Mediator complex subunit 18</fullName>
    </alternativeName>
    <alternativeName>
        <fullName>RNA polymerase II mediator complex protein pmc6</fullName>
    </alternativeName>
</protein>
<reference key="1">
    <citation type="journal article" date="2002" name="Nature">
        <title>The genome sequence of Schizosaccharomyces pombe.</title>
        <authorList>
            <person name="Wood V."/>
            <person name="Gwilliam R."/>
            <person name="Rajandream M.A."/>
            <person name="Lyne M.H."/>
            <person name="Lyne R."/>
            <person name="Stewart A."/>
            <person name="Sgouros J.G."/>
            <person name="Peat N."/>
            <person name="Hayles J."/>
            <person name="Baker S.G."/>
            <person name="Basham D."/>
            <person name="Bowman S."/>
            <person name="Brooks K."/>
            <person name="Brown D."/>
            <person name="Brown S."/>
            <person name="Chillingworth T."/>
            <person name="Churcher C.M."/>
            <person name="Collins M."/>
            <person name="Connor R."/>
            <person name="Cronin A."/>
            <person name="Davis P."/>
            <person name="Feltwell T."/>
            <person name="Fraser A."/>
            <person name="Gentles S."/>
            <person name="Goble A."/>
            <person name="Hamlin N."/>
            <person name="Harris D.E."/>
            <person name="Hidalgo J."/>
            <person name="Hodgson G."/>
            <person name="Holroyd S."/>
            <person name="Hornsby T."/>
            <person name="Howarth S."/>
            <person name="Huckle E.J."/>
            <person name="Hunt S."/>
            <person name="Jagels K."/>
            <person name="James K.D."/>
            <person name="Jones L."/>
            <person name="Jones M."/>
            <person name="Leather S."/>
            <person name="McDonald S."/>
            <person name="McLean J."/>
            <person name="Mooney P."/>
            <person name="Moule S."/>
            <person name="Mungall K.L."/>
            <person name="Murphy L.D."/>
            <person name="Niblett D."/>
            <person name="Odell C."/>
            <person name="Oliver K."/>
            <person name="O'Neil S."/>
            <person name="Pearson D."/>
            <person name="Quail M.A."/>
            <person name="Rabbinowitsch E."/>
            <person name="Rutherford K.M."/>
            <person name="Rutter S."/>
            <person name="Saunders D."/>
            <person name="Seeger K."/>
            <person name="Sharp S."/>
            <person name="Skelton J."/>
            <person name="Simmonds M.N."/>
            <person name="Squares R."/>
            <person name="Squares S."/>
            <person name="Stevens K."/>
            <person name="Taylor K."/>
            <person name="Taylor R.G."/>
            <person name="Tivey A."/>
            <person name="Walsh S.V."/>
            <person name="Warren T."/>
            <person name="Whitehead S."/>
            <person name="Woodward J.R."/>
            <person name="Volckaert G."/>
            <person name="Aert R."/>
            <person name="Robben J."/>
            <person name="Grymonprez B."/>
            <person name="Weltjens I."/>
            <person name="Vanstreels E."/>
            <person name="Rieger M."/>
            <person name="Schaefer M."/>
            <person name="Mueller-Auer S."/>
            <person name="Gabel C."/>
            <person name="Fuchs M."/>
            <person name="Duesterhoeft A."/>
            <person name="Fritzc C."/>
            <person name="Holzer E."/>
            <person name="Moestl D."/>
            <person name="Hilbert H."/>
            <person name="Borzym K."/>
            <person name="Langer I."/>
            <person name="Beck A."/>
            <person name="Lehrach H."/>
            <person name="Reinhardt R."/>
            <person name="Pohl T.M."/>
            <person name="Eger P."/>
            <person name="Zimmermann W."/>
            <person name="Wedler H."/>
            <person name="Wambutt R."/>
            <person name="Purnelle B."/>
            <person name="Goffeau A."/>
            <person name="Cadieu E."/>
            <person name="Dreano S."/>
            <person name="Gloux S."/>
            <person name="Lelaure V."/>
            <person name="Mottier S."/>
            <person name="Galibert F."/>
            <person name="Aves S.J."/>
            <person name="Xiang Z."/>
            <person name="Hunt C."/>
            <person name="Moore K."/>
            <person name="Hurst S.M."/>
            <person name="Lucas M."/>
            <person name="Rochet M."/>
            <person name="Gaillardin C."/>
            <person name="Tallada V.A."/>
            <person name="Garzon A."/>
            <person name="Thode G."/>
            <person name="Daga R.R."/>
            <person name="Cruzado L."/>
            <person name="Jimenez J."/>
            <person name="Sanchez M."/>
            <person name="del Rey F."/>
            <person name="Benito J."/>
            <person name="Dominguez A."/>
            <person name="Revuelta J.L."/>
            <person name="Moreno S."/>
            <person name="Armstrong J."/>
            <person name="Forsburg S.L."/>
            <person name="Cerutti L."/>
            <person name="Lowe T."/>
            <person name="McCombie W.R."/>
            <person name="Paulsen I."/>
            <person name="Potashkin J."/>
            <person name="Shpakovski G.V."/>
            <person name="Ussery D."/>
            <person name="Barrell B.G."/>
            <person name="Nurse P."/>
        </authorList>
    </citation>
    <scope>NUCLEOTIDE SEQUENCE [LARGE SCALE GENOMIC DNA]</scope>
    <source>
        <strain>972 / ATCC 24843</strain>
    </source>
</reference>
<reference key="2">
    <citation type="journal article" date="2002" name="Mol. Genet. Genomics">
        <title>The Schizosaccharomyces pombe genes sep10 and sep11 encode putative general transcriptional regulators involved in multiple cellular processes.</title>
        <authorList>
            <person name="Szilagyi Z."/>
            <person name="Grallert A."/>
            <person name="Nemeth N."/>
            <person name="Sipiczki M."/>
        </authorList>
    </citation>
    <scope>NUCLEOTIDE SEQUENCE [MRNA] OF 1-172</scope>
    <scope>FUNCTION</scope>
</reference>
<reference key="3">
    <citation type="journal article" date="2001" name="Proc. Natl. Acad. Sci. U.S.A.">
        <title>Analysis of Schizosaccharomyces pombe mediator reveals a set of essential subunits conserved between yeast and metazoan cells.</title>
        <authorList>
            <person name="Spaehr H."/>
            <person name="Samuelsen C.O."/>
            <person name="Baraznenok V."/>
            <person name="Ernest I."/>
            <person name="Huylebroeck D."/>
            <person name="Remacle J.E."/>
            <person name="Samuelsson T."/>
            <person name="Kieselbach T."/>
            <person name="Holmberg S."/>
            <person name="Gustafsson C.M."/>
        </authorList>
    </citation>
    <scope>IDENTIFICATION BY MASS SPECTROMETRY</scope>
    <scope>IDENTIFICATION IN THE MEDIATOR COMPLEX</scope>
</reference>
<reference key="4">
    <citation type="journal article" date="2006" name="Proc. Natl. Acad. Sci. U.S.A.">
        <title>The cyclin-dependent kinase 8 module sterically blocks Mediator interactions with RNA polymerase II.</title>
        <authorList>
            <person name="Elmlund H."/>
            <person name="Baraznenok V."/>
            <person name="Lindahl M."/>
            <person name="Samuelsen C.O."/>
            <person name="Koeck P.J.B."/>
            <person name="Holmberg S."/>
            <person name="Hebert H."/>
            <person name="Gustafsson C.M."/>
        </authorList>
    </citation>
    <scope>INTERACTION WITH MED17; PRK1 AND RBP1</scope>
</reference>
<dbReference type="EMBL" id="CU329670">
    <property type="protein sequence ID" value="CAB10853.2"/>
    <property type="molecule type" value="Genomic_DNA"/>
</dbReference>
<dbReference type="EMBL" id="AJ313525">
    <property type="protein sequence ID" value="CAC44901.1"/>
    <property type="molecule type" value="mRNA"/>
</dbReference>
<dbReference type="PIR" id="T38961">
    <property type="entry name" value="T38961"/>
</dbReference>
<dbReference type="RefSeq" id="NP_593364.1">
    <property type="nucleotide sequence ID" value="NM_001018796.2"/>
</dbReference>
<dbReference type="PDB" id="3C0T">
    <property type="method" value="X-ray"/>
    <property type="resolution" value="2.40 A"/>
    <property type="chains" value="A=1-207"/>
</dbReference>
<dbReference type="PDB" id="4H63">
    <property type="method" value="X-ray"/>
    <property type="resolution" value="3.40 A"/>
    <property type="chains" value="R=1-207"/>
</dbReference>
<dbReference type="PDB" id="5N9J">
    <property type="method" value="X-ray"/>
    <property type="resolution" value="3.40 A"/>
    <property type="chains" value="X=1-207"/>
</dbReference>
<dbReference type="PDB" id="5U0P">
    <property type="method" value="EM"/>
    <property type="resolution" value="4.40 A"/>
    <property type="chains" value="R=1-207"/>
</dbReference>
<dbReference type="PDB" id="5U0S">
    <property type="method" value="EM"/>
    <property type="resolution" value="7.80 A"/>
    <property type="chains" value="R=1-207"/>
</dbReference>
<dbReference type="PDBsum" id="3C0T"/>
<dbReference type="PDBsum" id="4H63"/>
<dbReference type="PDBsum" id="5N9J"/>
<dbReference type="PDBsum" id="5U0P"/>
<dbReference type="PDBsum" id="5U0S"/>
<dbReference type="EMDB" id="EMD-8479"/>
<dbReference type="EMDB" id="EMD-8480"/>
<dbReference type="SMR" id="O14198"/>
<dbReference type="BioGRID" id="278413">
    <property type="interactions" value="11"/>
</dbReference>
<dbReference type="DIP" id="DIP-38760N"/>
<dbReference type="FunCoup" id="O14198">
    <property type="interactions" value="35"/>
</dbReference>
<dbReference type="IntAct" id="O14198">
    <property type="interactions" value="4"/>
</dbReference>
<dbReference type="STRING" id="284812.O14198"/>
<dbReference type="PaxDb" id="4896-SPAC5D6.05.1"/>
<dbReference type="EnsemblFungi" id="SPAC5D6.05.1">
    <property type="protein sequence ID" value="SPAC5D6.05.1:pep"/>
    <property type="gene ID" value="SPAC5D6.05"/>
</dbReference>
<dbReference type="GeneID" id="2541925"/>
<dbReference type="KEGG" id="spo:2541925"/>
<dbReference type="PomBase" id="SPAC5D6.05">
    <property type="gene designation" value="med18"/>
</dbReference>
<dbReference type="VEuPathDB" id="FungiDB:SPAC5D6.05"/>
<dbReference type="eggNOG" id="ENOG502S7EN">
    <property type="taxonomic scope" value="Eukaryota"/>
</dbReference>
<dbReference type="HOGENOM" id="CLU_1327068_0_0_1"/>
<dbReference type="InParanoid" id="O14198"/>
<dbReference type="OMA" id="SHEYIVQ"/>
<dbReference type="EvolutionaryTrace" id="O14198"/>
<dbReference type="PRO" id="PR:O14198"/>
<dbReference type="Proteomes" id="UP000002485">
    <property type="component" value="Chromosome I"/>
</dbReference>
<dbReference type="GO" id="GO:0070847">
    <property type="term" value="C:core mediator complex"/>
    <property type="evidence" value="ECO:0000318"/>
    <property type="project" value="GO_Central"/>
</dbReference>
<dbReference type="GO" id="GO:0016592">
    <property type="term" value="C:mediator complex"/>
    <property type="evidence" value="ECO:0000314"/>
    <property type="project" value="PomBase"/>
</dbReference>
<dbReference type="GO" id="GO:0005634">
    <property type="term" value="C:nucleus"/>
    <property type="evidence" value="ECO:0007005"/>
    <property type="project" value="PomBase"/>
</dbReference>
<dbReference type="GO" id="GO:0003713">
    <property type="term" value="F:transcription coactivator activity"/>
    <property type="evidence" value="ECO:0000314"/>
    <property type="project" value="PomBase"/>
</dbReference>
<dbReference type="GO" id="GO:0003712">
    <property type="term" value="F:transcription coregulator activity"/>
    <property type="evidence" value="ECO:0000318"/>
    <property type="project" value="GO_Central"/>
</dbReference>
<dbReference type="GO" id="GO:0060261">
    <property type="term" value="P:positive regulation of transcription initiation by RNA polymerase II"/>
    <property type="evidence" value="ECO:0000269"/>
    <property type="project" value="PomBase"/>
</dbReference>
<dbReference type="Gene3D" id="2.40.320.10">
    <property type="entry name" value="Hypothetical Protein Pfu-838710-001"/>
    <property type="match status" value="1"/>
</dbReference>
<dbReference type="InterPro" id="IPR019095">
    <property type="entry name" value="Mediator_Med18"/>
</dbReference>
<dbReference type="PANTHER" id="PTHR13321:SF2">
    <property type="entry name" value="MEDIATOR OF RNA POLYMERASE II TRANSCRIPTION SUBUNIT 18"/>
    <property type="match status" value="1"/>
</dbReference>
<dbReference type="PANTHER" id="PTHR13321">
    <property type="entry name" value="MEDIATOR OF RNA POLYMERASE II TRANSCRIPTION, SUBUNIT 18"/>
    <property type="match status" value="1"/>
</dbReference>
<dbReference type="Pfam" id="PF09637">
    <property type="entry name" value="Med18"/>
    <property type="match status" value="1"/>
</dbReference>
<accession>O14198</accession>
<accession>Q96VF9</accession>
<feature type="chain" id="PRO_0000096367" description="Mediator of RNA polymerase II transcription subunit 18">
    <location>
        <begin position="1"/>
        <end position="207"/>
    </location>
</feature>
<feature type="strand" evidence="6">
    <location>
        <begin position="2"/>
        <end position="10"/>
    </location>
</feature>
<feature type="helix" evidence="6">
    <location>
        <begin position="12"/>
        <end position="14"/>
    </location>
</feature>
<feature type="helix" evidence="6">
    <location>
        <begin position="15"/>
        <end position="25"/>
    </location>
</feature>
<feature type="strand" evidence="6">
    <location>
        <begin position="26"/>
        <end position="41"/>
    </location>
</feature>
<feature type="strand" evidence="7">
    <location>
        <begin position="46"/>
        <end position="48"/>
    </location>
</feature>
<feature type="helix" evidence="6">
    <location>
        <begin position="52"/>
        <end position="54"/>
    </location>
</feature>
<feature type="strand" evidence="6">
    <location>
        <begin position="55"/>
        <end position="61"/>
    </location>
</feature>
<feature type="helix" evidence="6">
    <location>
        <begin position="62"/>
        <end position="64"/>
    </location>
</feature>
<feature type="helix" evidence="7">
    <location>
        <begin position="65"/>
        <end position="68"/>
    </location>
</feature>
<feature type="helix" evidence="6">
    <location>
        <begin position="72"/>
        <end position="74"/>
    </location>
</feature>
<feature type="strand" evidence="6">
    <location>
        <begin position="78"/>
        <end position="83"/>
    </location>
</feature>
<feature type="strand" evidence="7">
    <location>
        <begin position="91"/>
        <end position="93"/>
    </location>
</feature>
<feature type="strand" evidence="6">
    <location>
        <begin position="95"/>
        <end position="104"/>
    </location>
</feature>
<feature type="helix" evidence="6">
    <location>
        <begin position="109"/>
        <end position="115"/>
    </location>
</feature>
<feature type="strand" evidence="6">
    <location>
        <begin position="118"/>
        <end position="133"/>
    </location>
</feature>
<feature type="strand" evidence="6">
    <location>
        <begin position="136"/>
        <end position="148"/>
    </location>
</feature>
<feature type="turn" evidence="7">
    <location>
        <begin position="153"/>
        <end position="155"/>
    </location>
</feature>
<feature type="strand" evidence="6">
    <location>
        <begin position="156"/>
        <end position="160"/>
    </location>
</feature>
<feature type="strand" evidence="6">
    <location>
        <begin position="165"/>
        <end position="174"/>
    </location>
</feature>
<feature type="helix" evidence="6">
    <location>
        <begin position="179"/>
        <end position="196"/>
    </location>
</feature>
<feature type="turn" evidence="6">
    <location>
        <begin position="197"/>
        <end position="199"/>
    </location>
</feature>
<gene>
    <name type="primary">med18</name>
    <name type="synonym">pmc6</name>
    <name type="synonym">sep11</name>
    <name type="ORF">SPAC5D6.05</name>
</gene>
<name>MED18_SCHPO</name>
<proteinExistence type="evidence at protein level"/>
<organism>
    <name type="scientific">Schizosaccharomyces pombe (strain 972 / ATCC 24843)</name>
    <name type="common">Fission yeast</name>
    <dbReference type="NCBI Taxonomy" id="284812"/>
    <lineage>
        <taxon>Eukaryota</taxon>
        <taxon>Fungi</taxon>
        <taxon>Dikarya</taxon>
        <taxon>Ascomycota</taxon>
        <taxon>Taphrinomycotina</taxon>
        <taxon>Schizosaccharomycetes</taxon>
        <taxon>Schizosaccharomycetales</taxon>
        <taxon>Schizosaccharomycetaceae</taxon>
        <taxon>Schizosaccharomyces</taxon>
    </lineage>
</organism>
<keyword id="KW-0002">3D-structure</keyword>
<keyword id="KW-0010">Activator</keyword>
<keyword id="KW-0539">Nucleus</keyword>
<keyword id="KW-1185">Reference proteome</keyword>
<keyword id="KW-0804">Transcription</keyword>
<keyword id="KW-0805">Transcription regulation</keyword>
<sequence>MQELYLLGVVPSRRFEAVVNSLSKTLDGPKTILEFWVVYRPKDVPPNLPRQPDSWLRLCSNIESHDETDTEWSKNTQWSMYLEGNSEPKREDKCGIRPVNRAKLTNGSVTEFVEKMGYEFSHEYIIQGLEYFFFDTTVRIYQTLIPSQQRSIKPPFHPMNEEQPWILHVYTHVADASNQVAMAKAEANLTKVKTLLSAFCDLKNVRL</sequence>
<comment type="function">
    <text evidence="3">Component of the Mediator complex, a coactivator involved in the regulated transcription of nearly all RNA polymerase II-dependent genes. Mediator functions as a bridge to convey information from gene-specific regulatory proteins to the basal RNA polymerase II transcription machinery. Mediator is recruited to promoters by direct interactions with regulatory proteins and serves as a scaffold for the assembly of a functional preinitiation complex with RNA polymerase II and the general transcription factors.</text>
</comment>
<comment type="subunit">
    <text evidence="2 4">Component of the Mediator complex. Interacts with med17, prk1 and rbp1.</text>
</comment>
<comment type="subcellular location">
    <subcellularLocation>
        <location evidence="1">Nucleus</location>
    </subcellularLocation>
</comment>
<comment type="similarity">
    <text evidence="5">Belongs to the Mediator complex subunit 18 family.</text>
</comment>
<evidence type="ECO:0000250" key="1"/>
<evidence type="ECO:0000269" key="2">
    <source>
    </source>
</evidence>
<evidence type="ECO:0000269" key="3">
    <source>
    </source>
</evidence>
<evidence type="ECO:0000269" key="4">
    <source>
    </source>
</evidence>
<evidence type="ECO:0000305" key="5"/>
<evidence type="ECO:0007829" key="6">
    <source>
        <dbReference type="PDB" id="3C0T"/>
    </source>
</evidence>
<evidence type="ECO:0007829" key="7">
    <source>
        <dbReference type="PDB" id="5N9J"/>
    </source>
</evidence>